<protein>
    <recommendedName>
        <fullName evidence="1">Trigger factor</fullName>
        <shortName evidence="1">TF</shortName>
        <ecNumber evidence="1">5.2.1.8</ecNumber>
    </recommendedName>
    <alternativeName>
        <fullName evidence="1">PPIase</fullName>
    </alternativeName>
</protein>
<accession>A1TCB8</accession>
<evidence type="ECO:0000255" key="1">
    <source>
        <dbReference type="HAMAP-Rule" id="MF_00303"/>
    </source>
</evidence>
<evidence type="ECO:0000256" key="2">
    <source>
        <dbReference type="SAM" id="MobiDB-lite"/>
    </source>
</evidence>
<organism>
    <name type="scientific">Mycolicibacterium vanbaalenii (strain DSM 7251 / JCM 13017 / BCRC 16820 / KCTC 9966 / NRRL B-24157 / PYR-1)</name>
    <name type="common">Mycobacterium vanbaalenii</name>
    <dbReference type="NCBI Taxonomy" id="350058"/>
    <lineage>
        <taxon>Bacteria</taxon>
        <taxon>Bacillati</taxon>
        <taxon>Actinomycetota</taxon>
        <taxon>Actinomycetes</taxon>
        <taxon>Mycobacteriales</taxon>
        <taxon>Mycobacteriaceae</taxon>
        <taxon>Mycolicibacterium</taxon>
    </lineage>
</organism>
<proteinExistence type="inferred from homology"/>
<dbReference type="EC" id="5.2.1.8" evidence="1"/>
<dbReference type="EMBL" id="CP000511">
    <property type="protein sequence ID" value="ABM14818.1"/>
    <property type="molecule type" value="Genomic_DNA"/>
</dbReference>
<dbReference type="RefSeq" id="WP_011781197.1">
    <property type="nucleotide sequence ID" value="NZ_JACKSD010000156.1"/>
</dbReference>
<dbReference type="SMR" id="A1TCB8"/>
<dbReference type="STRING" id="350058.Mvan_4041"/>
<dbReference type="KEGG" id="mva:Mvan_4041"/>
<dbReference type="eggNOG" id="COG0544">
    <property type="taxonomic scope" value="Bacteria"/>
</dbReference>
<dbReference type="HOGENOM" id="CLU_033058_3_0_11"/>
<dbReference type="Proteomes" id="UP000009159">
    <property type="component" value="Chromosome"/>
</dbReference>
<dbReference type="GO" id="GO:0005737">
    <property type="term" value="C:cytoplasm"/>
    <property type="evidence" value="ECO:0007669"/>
    <property type="project" value="UniProtKB-SubCell"/>
</dbReference>
<dbReference type="GO" id="GO:0003755">
    <property type="term" value="F:peptidyl-prolyl cis-trans isomerase activity"/>
    <property type="evidence" value="ECO:0007669"/>
    <property type="project" value="UniProtKB-UniRule"/>
</dbReference>
<dbReference type="GO" id="GO:0044183">
    <property type="term" value="F:protein folding chaperone"/>
    <property type="evidence" value="ECO:0007669"/>
    <property type="project" value="TreeGrafter"/>
</dbReference>
<dbReference type="GO" id="GO:0043022">
    <property type="term" value="F:ribosome binding"/>
    <property type="evidence" value="ECO:0007669"/>
    <property type="project" value="TreeGrafter"/>
</dbReference>
<dbReference type="GO" id="GO:0051083">
    <property type="term" value="P:'de novo' cotranslational protein folding"/>
    <property type="evidence" value="ECO:0007669"/>
    <property type="project" value="TreeGrafter"/>
</dbReference>
<dbReference type="GO" id="GO:0051301">
    <property type="term" value="P:cell division"/>
    <property type="evidence" value="ECO:0007669"/>
    <property type="project" value="UniProtKB-KW"/>
</dbReference>
<dbReference type="GO" id="GO:0061077">
    <property type="term" value="P:chaperone-mediated protein folding"/>
    <property type="evidence" value="ECO:0007669"/>
    <property type="project" value="TreeGrafter"/>
</dbReference>
<dbReference type="GO" id="GO:0015031">
    <property type="term" value="P:protein transport"/>
    <property type="evidence" value="ECO:0007669"/>
    <property type="project" value="UniProtKB-UniRule"/>
</dbReference>
<dbReference type="GO" id="GO:0043335">
    <property type="term" value="P:protein unfolding"/>
    <property type="evidence" value="ECO:0007669"/>
    <property type="project" value="TreeGrafter"/>
</dbReference>
<dbReference type="FunFam" id="3.10.50.40:FF:000019">
    <property type="entry name" value="Trigger factor"/>
    <property type="match status" value="1"/>
</dbReference>
<dbReference type="Gene3D" id="3.10.50.40">
    <property type="match status" value="1"/>
</dbReference>
<dbReference type="Gene3D" id="3.30.70.1050">
    <property type="entry name" value="Trigger factor ribosome-binding domain"/>
    <property type="match status" value="1"/>
</dbReference>
<dbReference type="Gene3D" id="1.10.3120.10">
    <property type="entry name" value="Trigger factor, C-terminal domain"/>
    <property type="match status" value="1"/>
</dbReference>
<dbReference type="HAMAP" id="MF_00303">
    <property type="entry name" value="Trigger_factor_Tig"/>
    <property type="match status" value="1"/>
</dbReference>
<dbReference type="InterPro" id="IPR046357">
    <property type="entry name" value="PPIase_dom_sf"/>
</dbReference>
<dbReference type="InterPro" id="IPR001179">
    <property type="entry name" value="PPIase_FKBP_dom"/>
</dbReference>
<dbReference type="InterPro" id="IPR005215">
    <property type="entry name" value="Trig_fac"/>
</dbReference>
<dbReference type="InterPro" id="IPR008880">
    <property type="entry name" value="Trigger_fac_C"/>
</dbReference>
<dbReference type="InterPro" id="IPR037041">
    <property type="entry name" value="Trigger_fac_C_sf"/>
</dbReference>
<dbReference type="InterPro" id="IPR008881">
    <property type="entry name" value="Trigger_fac_ribosome-bd_bac"/>
</dbReference>
<dbReference type="InterPro" id="IPR036611">
    <property type="entry name" value="Trigger_fac_ribosome-bd_sf"/>
</dbReference>
<dbReference type="InterPro" id="IPR027304">
    <property type="entry name" value="Trigger_fact/SurA_dom_sf"/>
</dbReference>
<dbReference type="NCBIfam" id="TIGR00115">
    <property type="entry name" value="tig"/>
    <property type="match status" value="1"/>
</dbReference>
<dbReference type="PANTHER" id="PTHR30560">
    <property type="entry name" value="TRIGGER FACTOR CHAPERONE AND PEPTIDYL-PROLYL CIS/TRANS ISOMERASE"/>
    <property type="match status" value="1"/>
</dbReference>
<dbReference type="PANTHER" id="PTHR30560:SF3">
    <property type="entry name" value="TRIGGER FACTOR-LIKE PROTEIN TIG, CHLOROPLASTIC"/>
    <property type="match status" value="1"/>
</dbReference>
<dbReference type="Pfam" id="PF00254">
    <property type="entry name" value="FKBP_C"/>
    <property type="match status" value="1"/>
</dbReference>
<dbReference type="Pfam" id="PF05698">
    <property type="entry name" value="Trigger_C"/>
    <property type="match status" value="1"/>
</dbReference>
<dbReference type="Pfam" id="PF05697">
    <property type="entry name" value="Trigger_N"/>
    <property type="match status" value="1"/>
</dbReference>
<dbReference type="PIRSF" id="PIRSF003095">
    <property type="entry name" value="Trigger_factor"/>
    <property type="match status" value="1"/>
</dbReference>
<dbReference type="SUPFAM" id="SSF54534">
    <property type="entry name" value="FKBP-like"/>
    <property type="match status" value="1"/>
</dbReference>
<dbReference type="SUPFAM" id="SSF109998">
    <property type="entry name" value="Triger factor/SurA peptide-binding domain-like"/>
    <property type="match status" value="1"/>
</dbReference>
<dbReference type="SUPFAM" id="SSF102735">
    <property type="entry name" value="Trigger factor ribosome-binding domain"/>
    <property type="match status" value="1"/>
</dbReference>
<dbReference type="PROSITE" id="PS50059">
    <property type="entry name" value="FKBP_PPIASE"/>
    <property type="match status" value="1"/>
</dbReference>
<sequence>MKSTVEKLSPTRVRINVEVPFTELEPDIDRAFKQLAKQIRLPGFRPGKAPRKLLEARVGRGAVLEQVVNDALPARYSEAVTAESLQPIGQPEIEVTKLEDNEELVFTAEVDVRPDIDLPDLGALKITVDPISVTDEDVDAEIEALQKRFGTLTGVDRAAEDGDFVSIDLSATVDGKDVPEANTEGLSHEVGSGQLIEGLDEAIIGLKADESKVFTTTLVAGEHAGQEAEVTVTVKSIKVRELPEVDDDFAQLASEFDTVEELRADLKEKISRFKRVQQAEAIRDKAIEVLLEQTEIPVPEAVVQAQVDDTLHNAIHGLDHDEDKFAESLKEQGSSREEFDADNRANAEKAIKTQLLMDSIADKLEIQVGQNDLTERLVLMSRQYGLEPQQLLQMLQQNNQLPAMFADVRRGLTVAAVVHGATVTDTDGAEIDTAEFFGPSGEQAEAEQDEAAPAEDATEETDADSDEAADDSK</sequence>
<keyword id="KW-0131">Cell cycle</keyword>
<keyword id="KW-0132">Cell division</keyword>
<keyword id="KW-0143">Chaperone</keyword>
<keyword id="KW-0963">Cytoplasm</keyword>
<keyword id="KW-0413">Isomerase</keyword>
<keyword id="KW-0697">Rotamase</keyword>
<name>TIG_MYCVP</name>
<reference key="1">
    <citation type="submission" date="2006-12" db="EMBL/GenBank/DDBJ databases">
        <title>Complete sequence of Mycobacterium vanbaalenii PYR-1.</title>
        <authorList>
            <consortium name="US DOE Joint Genome Institute"/>
            <person name="Copeland A."/>
            <person name="Lucas S."/>
            <person name="Lapidus A."/>
            <person name="Barry K."/>
            <person name="Detter J.C."/>
            <person name="Glavina del Rio T."/>
            <person name="Hammon N."/>
            <person name="Israni S."/>
            <person name="Dalin E."/>
            <person name="Tice H."/>
            <person name="Pitluck S."/>
            <person name="Singan V."/>
            <person name="Schmutz J."/>
            <person name="Larimer F."/>
            <person name="Land M."/>
            <person name="Hauser L."/>
            <person name="Kyrpides N."/>
            <person name="Anderson I.J."/>
            <person name="Miller C."/>
            <person name="Richardson P."/>
        </authorList>
    </citation>
    <scope>NUCLEOTIDE SEQUENCE [LARGE SCALE GENOMIC DNA]</scope>
    <source>
        <strain>DSM 7251 / JCM 13017 / BCRC 16820 / KCTC 9966 / NRRL B-24157 / PYR-1</strain>
    </source>
</reference>
<gene>
    <name evidence="1" type="primary">tig</name>
    <name type="ordered locus">Mvan_4041</name>
</gene>
<feature type="chain" id="PRO_1000022717" description="Trigger factor">
    <location>
        <begin position="1"/>
        <end position="473"/>
    </location>
</feature>
<feature type="domain" description="PPIase FKBP-type" evidence="1">
    <location>
        <begin position="162"/>
        <end position="243"/>
    </location>
</feature>
<feature type="region of interest" description="Disordered" evidence="2">
    <location>
        <begin position="433"/>
        <end position="473"/>
    </location>
</feature>
<feature type="compositionally biased region" description="Acidic residues" evidence="2">
    <location>
        <begin position="444"/>
        <end position="473"/>
    </location>
</feature>
<comment type="function">
    <text evidence="1">Involved in protein export. Acts as a chaperone by maintaining the newly synthesized protein in an open conformation. Functions as a peptidyl-prolyl cis-trans isomerase.</text>
</comment>
<comment type="catalytic activity">
    <reaction evidence="1">
        <text>[protein]-peptidylproline (omega=180) = [protein]-peptidylproline (omega=0)</text>
        <dbReference type="Rhea" id="RHEA:16237"/>
        <dbReference type="Rhea" id="RHEA-COMP:10747"/>
        <dbReference type="Rhea" id="RHEA-COMP:10748"/>
        <dbReference type="ChEBI" id="CHEBI:83833"/>
        <dbReference type="ChEBI" id="CHEBI:83834"/>
        <dbReference type="EC" id="5.2.1.8"/>
    </reaction>
</comment>
<comment type="subcellular location">
    <subcellularLocation>
        <location>Cytoplasm</location>
    </subcellularLocation>
    <text evidence="1">About half TF is bound to the ribosome near the polypeptide exit tunnel while the other half is free in the cytoplasm.</text>
</comment>
<comment type="domain">
    <text evidence="1">Consists of 3 domains; the N-terminus binds the ribosome, the middle domain has PPIase activity, while the C-terminus has intrinsic chaperone activity on its own.</text>
</comment>
<comment type="similarity">
    <text evidence="1">Belongs to the FKBP-type PPIase family. Tig subfamily.</text>
</comment>